<comment type="function">
    <text>Member of the two-component regulatory system NtrY/NtrX involved in the activation of nitrogen assimilatory genes such as GlnA. NtrX is probably phosphorylated by NtrY and interacts with sigma-54.</text>
</comment>
<accession>Q04849</accession>
<accession>A8IBK2</accession>
<feature type="chain" id="PRO_0000081164" description="Nitrogen assimilation regulatory protein NtrX">
    <location>
        <begin position="1"/>
        <end position="454"/>
    </location>
</feature>
<feature type="domain" description="Response regulatory" evidence="2">
    <location>
        <begin position="4"/>
        <end position="120"/>
    </location>
</feature>
<feature type="domain" description="Sigma-54 factor interaction" evidence="3">
    <location>
        <begin position="141"/>
        <end position="367"/>
    </location>
</feature>
<feature type="DNA-binding region" description="H-T-H motif" evidence="1">
    <location>
        <begin position="430"/>
        <end position="449"/>
    </location>
</feature>
<feature type="binding site" evidence="3">
    <location>
        <begin position="169"/>
        <end position="176"/>
    </location>
    <ligand>
        <name>ATP</name>
        <dbReference type="ChEBI" id="CHEBI:30616"/>
    </ligand>
</feature>
<feature type="binding site" evidence="3">
    <location>
        <begin position="229"/>
        <end position="238"/>
    </location>
    <ligand>
        <name>ATP</name>
        <dbReference type="ChEBI" id="CHEBI:30616"/>
    </ligand>
</feature>
<feature type="modified residue" description="4-aspartylphosphate" evidence="2">
    <location>
        <position position="53"/>
    </location>
</feature>
<dbReference type="EMBL" id="X63841">
    <property type="protein sequence ID" value="CAA45331.1"/>
    <property type="molecule type" value="Genomic_DNA"/>
</dbReference>
<dbReference type="EMBL" id="AP009384">
    <property type="protein sequence ID" value="BAF89081.1"/>
    <property type="molecule type" value="Genomic_DNA"/>
</dbReference>
<dbReference type="PIR" id="S18625">
    <property type="entry name" value="S18625"/>
</dbReference>
<dbReference type="RefSeq" id="WP_012171607.1">
    <property type="nucleotide sequence ID" value="NC_009937.1"/>
</dbReference>
<dbReference type="SMR" id="Q04849"/>
<dbReference type="STRING" id="438753.AZC_3083"/>
<dbReference type="KEGG" id="azc:AZC_3083"/>
<dbReference type="eggNOG" id="COG2204">
    <property type="taxonomic scope" value="Bacteria"/>
</dbReference>
<dbReference type="HOGENOM" id="CLU_000445_0_6_5"/>
<dbReference type="Proteomes" id="UP000000270">
    <property type="component" value="Chromosome"/>
</dbReference>
<dbReference type="GO" id="GO:0005524">
    <property type="term" value="F:ATP binding"/>
    <property type="evidence" value="ECO:0007669"/>
    <property type="project" value="UniProtKB-KW"/>
</dbReference>
<dbReference type="GO" id="GO:0016887">
    <property type="term" value="F:ATP hydrolysis activity"/>
    <property type="evidence" value="ECO:0007669"/>
    <property type="project" value="InterPro"/>
</dbReference>
<dbReference type="GO" id="GO:0043565">
    <property type="term" value="F:sequence-specific DNA binding"/>
    <property type="evidence" value="ECO:0007669"/>
    <property type="project" value="InterPro"/>
</dbReference>
<dbReference type="GO" id="GO:0009399">
    <property type="term" value="P:nitrogen fixation"/>
    <property type="evidence" value="ECO:0007669"/>
    <property type="project" value="UniProtKB-KW"/>
</dbReference>
<dbReference type="GO" id="GO:0000160">
    <property type="term" value="P:phosphorelay signal transduction system"/>
    <property type="evidence" value="ECO:0007669"/>
    <property type="project" value="UniProtKB-KW"/>
</dbReference>
<dbReference type="GO" id="GO:0006355">
    <property type="term" value="P:regulation of DNA-templated transcription"/>
    <property type="evidence" value="ECO:0007669"/>
    <property type="project" value="InterPro"/>
</dbReference>
<dbReference type="CDD" id="cd00009">
    <property type="entry name" value="AAA"/>
    <property type="match status" value="1"/>
</dbReference>
<dbReference type="CDD" id="cd17550">
    <property type="entry name" value="REC_NtrX-like"/>
    <property type="match status" value="1"/>
</dbReference>
<dbReference type="FunFam" id="3.40.50.2300:FF:000018">
    <property type="entry name" value="DNA-binding transcriptional regulator NtrC"/>
    <property type="match status" value="1"/>
</dbReference>
<dbReference type="FunFam" id="3.40.50.300:FF:000006">
    <property type="entry name" value="DNA-binding transcriptional regulator NtrC"/>
    <property type="match status" value="1"/>
</dbReference>
<dbReference type="FunFam" id="1.10.10.60:FF:000165">
    <property type="entry name" value="Two-component system nitrogen regulation response regulator NtrX"/>
    <property type="match status" value="1"/>
</dbReference>
<dbReference type="Gene3D" id="1.10.8.60">
    <property type="match status" value="1"/>
</dbReference>
<dbReference type="Gene3D" id="3.40.50.2300">
    <property type="match status" value="1"/>
</dbReference>
<dbReference type="Gene3D" id="1.10.10.60">
    <property type="entry name" value="Homeodomain-like"/>
    <property type="match status" value="1"/>
</dbReference>
<dbReference type="Gene3D" id="3.40.50.300">
    <property type="entry name" value="P-loop containing nucleotide triphosphate hydrolases"/>
    <property type="match status" value="1"/>
</dbReference>
<dbReference type="InterPro" id="IPR003593">
    <property type="entry name" value="AAA+_ATPase"/>
</dbReference>
<dbReference type="InterPro" id="IPR011006">
    <property type="entry name" value="CheY-like_superfamily"/>
</dbReference>
<dbReference type="InterPro" id="IPR009057">
    <property type="entry name" value="Homeodomain-like_sf"/>
</dbReference>
<dbReference type="InterPro" id="IPR002197">
    <property type="entry name" value="HTH_Fis"/>
</dbReference>
<dbReference type="InterPro" id="IPR027417">
    <property type="entry name" value="P-loop_NTPase"/>
</dbReference>
<dbReference type="InterPro" id="IPR001789">
    <property type="entry name" value="Sig_transdc_resp-reg_receiver"/>
</dbReference>
<dbReference type="InterPro" id="IPR002078">
    <property type="entry name" value="Sigma_54_int"/>
</dbReference>
<dbReference type="InterPro" id="IPR025943">
    <property type="entry name" value="Sigma_54_int_dom_ATP-bd_2"/>
</dbReference>
<dbReference type="InterPro" id="IPR025944">
    <property type="entry name" value="Sigma_54_int_dom_CS"/>
</dbReference>
<dbReference type="PANTHER" id="PTHR32071:SF17">
    <property type="entry name" value="TRANSCRIPTIONAL REGULATOR (NTRC FAMILY)"/>
    <property type="match status" value="1"/>
</dbReference>
<dbReference type="PANTHER" id="PTHR32071">
    <property type="entry name" value="TRANSCRIPTIONAL REGULATORY PROTEIN"/>
    <property type="match status" value="1"/>
</dbReference>
<dbReference type="Pfam" id="PF02954">
    <property type="entry name" value="HTH_8"/>
    <property type="match status" value="1"/>
</dbReference>
<dbReference type="Pfam" id="PF00072">
    <property type="entry name" value="Response_reg"/>
    <property type="match status" value="1"/>
</dbReference>
<dbReference type="Pfam" id="PF00158">
    <property type="entry name" value="Sigma54_activat"/>
    <property type="match status" value="1"/>
</dbReference>
<dbReference type="SMART" id="SM00382">
    <property type="entry name" value="AAA"/>
    <property type="match status" value="1"/>
</dbReference>
<dbReference type="SMART" id="SM00448">
    <property type="entry name" value="REC"/>
    <property type="match status" value="1"/>
</dbReference>
<dbReference type="SUPFAM" id="SSF52172">
    <property type="entry name" value="CheY-like"/>
    <property type="match status" value="1"/>
</dbReference>
<dbReference type="SUPFAM" id="SSF46689">
    <property type="entry name" value="Homeodomain-like"/>
    <property type="match status" value="1"/>
</dbReference>
<dbReference type="SUPFAM" id="SSF52540">
    <property type="entry name" value="P-loop containing nucleoside triphosphate hydrolases"/>
    <property type="match status" value="1"/>
</dbReference>
<dbReference type="PROSITE" id="PS50110">
    <property type="entry name" value="RESPONSE_REGULATORY"/>
    <property type="match status" value="1"/>
</dbReference>
<dbReference type="PROSITE" id="PS00676">
    <property type="entry name" value="SIGMA54_INTERACT_2"/>
    <property type="match status" value="1"/>
</dbReference>
<dbReference type="PROSITE" id="PS00688">
    <property type="entry name" value="SIGMA54_INTERACT_3"/>
    <property type="match status" value="1"/>
</dbReference>
<dbReference type="PROSITE" id="PS50045">
    <property type="entry name" value="SIGMA54_INTERACT_4"/>
    <property type="match status" value="1"/>
</dbReference>
<organism>
    <name type="scientific">Azorhizobium caulinodans (strain ATCC 43989 / DSM 5975 / JCM 20966 / LMG 6465 / NBRC 14845 / NCIMB 13405 / ORS 571)</name>
    <dbReference type="NCBI Taxonomy" id="438753"/>
    <lineage>
        <taxon>Bacteria</taxon>
        <taxon>Pseudomonadati</taxon>
        <taxon>Pseudomonadota</taxon>
        <taxon>Alphaproteobacteria</taxon>
        <taxon>Hyphomicrobiales</taxon>
        <taxon>Xanthobacteraceae</taxon>
        <taxon>Azorhizobium</taxon>
    </lineage>
</organism>
<reference key="1">
    <citation type="journal article" date="1991" name="Mol. Gen. Genet.">
        <title>Characterization of a novel Azorhizobium caulinodans ORS571 two-component regulatory system, NtrY/NtrX, involved in nitrogen fixation and metabolism.</title>
        <authorList>
            <person name="Pawlowski K."/>
            <person name="Klosse U."/>
            <person name="de Bruijn F.J."/>
        </authorList>
    </citation>
    <scope>NUCLEOTIDE SEQUENCE [GENOMIC DNA]</scope>
</reference>
<reference key="2">
    <citation type="submission" date="2007-04" db="EMBL/GenBank/DDBJ databases">
        <title>Complete genome sequence of the nitrogen-fixing bacterium Azorhizobium caulinodans ORS571.</title>
        <authorList>
            <person name="Lee K.B."/>
            <person name="Backer P.D."/>
            <person name="Aono T."/>
            <person name="Liu C.T."/>
            <person name="Suzuki S."/>
            <person name="Suzuki T."/>
            <person name="Kaneko T."/>
            <person name="Yamada M."/>
            <person name="Tabata S."/>
            <person name="Kupfer D.M."/>
            <person name="Najar F.Z."/>
            <person name="Wiley G.B."/>
            <person name="Roe B."/>
            <person name="Binnewies T."/>
            <person name="Ussery D."/>
            <person name="Vereecke D."/>
            <person name="Gevers D."/>
            <person name="Holsters M."/>
            <person name="Oyaizu H."/>
        </authorList>
    </citation>
    <scope>NUCLEOTIDE SEQUENCE [LARGE SCALE GENOMIC DNA]</scope>
    <source>
        <strain>ATCC 43989 / DSM 5975 / JCM 20966 / LMG 6465 / NBRC 14845 / NCIMB 13405 / ORS 571</strain>
    </source>
</reference>
<protein>
    <recommendedName>
        <fullName>Nitrogen assimilation regulatory protein NtrX</fullName>
    </recommendedName>
</protein>
<proteinExistence type="inferred from homology"/>
<evidence type="ECO:0000250" key="1"/>
<evidence type="ECO:0000255" key="2">
    <source>
        <dbReference type="PROSITE-ProRule" id="PRU00169"/>
    </source>
</evidence>
<evidence type="ECO:0000255" key="3">
    <source>
        <dbReference type="PROSITE-ProRule" id="PRU00193"/>
    </source>
</evidence>
<keyword id="KW-0010">Activator</keyword>
<keyword id="KW-0067">ATP-binding</keyword>
<keyword id="KW-0238">DNA-binding</keyword>
<keyword id="KW-0535">Nitrogen fixation</keyword>
<keyword id="KW-0547">Nucleotide-binding</keyword>
<keyword id="KW-0597">Phosphoprotein</keyword>
<keyword id="KW-1185">Reference proteome</keyword>
<keyword id="KW-0678">Repressor</keyword>
<keyword id="KW-0804">Transcription</keyword>
<keyword id="KW-0805">Transcription regulation</keyword>
<keyword id="KW-0902">Two-component regulatory system</keyword>
<name>NTRX_AZOC5</name>
<gene>
    <name type="primary">ntrX</name>
    <name type="ordered locus">AZC_3083</name>
</gene>
<sequence>MAHDILIVDDEPDISGLVAGILEDEGYSARTARDADGALAEIAARRPNLIFLDIWLQGSRLDGLELLDIIKREHPEVPVVMISGHGNIETAVAAIKRGAYDFIEKPFNADRLVVITERALETLRLRREVRELKQLTQPHTMVGRSSVIQQLRATVDRVGPTNSRILIVGPSGSGKELTARMIHAASARAQGPFVVINAAAITPERLEYELFGVEEGEGRERHRGALEEAHGGTLFLDEIADMPRETQNRVLRVLVEQTFSRIGSSEKVRVDVRIISSTGRHLEEEIAAGRFREDLYHRLSVVPIRVPPLAERREDIPDLVDFFIDLISQTTGLQRRKVGEDAMAVLQSHDWPGNVRQLRNNVERLLILAGGDPDAEVTASMLPPDVGALVPTLPNGNGGEHLMGLPLREAREVFEREYLAAQINRFGGNISRTAEFVGMERSALHRKLKALGVG</sequence>